<protein>
    <recommendedName>
        <fullName evidence="1">Acetylglutamate kinase</fullName>
        <ecNumber evidence="1">2.7.2.8</ecNumber>
    </recommendedName>
    <alternativeName>
        <fullName evidence="1">N-acetyl-L-glutamate 5-phosphotransferase</fullName>
    </alternativeName>
    <alternativeName>
        <fullName evidence="1">NAG kinase</fullName>
        <shortName evidence="1">NAGK</shortName>
    </alternativeName>
</protein>
<dbReference type="EC" id="2.7.2.8" evidence="1"/>
<dbReference type="EMBL" id="CR555306">
    <property type="protein sequence ID" value="CAI08578.1"/>
    <property type="molecule type" value="Genomic_DNA"/>
</dbReference>
<dbReference type="RefSeq" id="WP_011238264.1">
    <property type="nucleotide sequence ID" value="NC_006513.1"/>
</dbReference>
<dbReference type="SMR" id="Q5P286"/>
<dbReference type="STRING" id="76114.ebA4330"/>
<dbReference type="KEGG" id="eba:ebA4330"/>
<dbReference type="eggNOG" id="COG0548">
    <property type="taxonomic scope" value="Bacteria"/>
</dbReference>
<dbReference type="HOGENOM" id="CLU_053680_0_0_4"/>
<dbReference type="OrthoDB" id="9803155at2"/>
<dbReference type="UniPathway" id="UPA00068">
    <property type="reaction ID" value="UER00107"/>
</dbReference>
<dbReference type="Proteomes" id="UP000006552">
    <property type="component" value="Chromosome"/>
</dbReference>
<dbReference type="GO" id="GO:0005737">
    <property type="term" value="C:cytoplasm"/>
    <property type="evidence" value="ECO:0007669"/>
    <property type="project" value="UniProtKB-SubCell"/>
</dbReference>
<dbReference type="GO" id="GO:0003991">
    <property type="term" value="F:acetylglutamate kinase activity"/>
    <property type="evidence" value="ECO:0007669"/>
    <property type="project" value="UniProtKB-UniRule"/>
</dbReference>
<dbReference type="GO" id="GO:0005524">
    <property type="term" value="F:ATP binding"/>
    <property type="evidence" value="ECO:0007669"/>
    <property type="project" value="UniProtKB-UniRule"/>
</dbReference>
<dbReference type="GO" id="GO:0042450">
    <property type="term" value="P:arginine biosynthetic process via ornithine"/>
    <property type="evidence" value="ECO:0007669"/>
    <property type="project" value="UniProtKB-UniRule"/>
</dbReference>
<dbReference type="GO" id="GO:0006526">
    <property type="term" value="P:L-arginine biosynthetic process"/>
    <property type="evidence" value="ECO:0007669"/>
    <property type="project" value="UniProtKB-UniPathway"/>
</dbReference>
<dbReference type="CDD" id="cd04250">
    <property type="entry name" value="AAK_NAGK-C"/>
    <property type="match status" value="1"/>
</dbReference>
<dbReference type="FunFam" id="3.40.1160.10:FF:000004">
    <property type="entry name" value="Acetylglutamate kinase"/>
    <property type="match status" value="1"/>
</dbReference>
<dbReference type="Gene3D" id="3.40.1160.10">
    <property type="entry name" value="Acetylglutamate kinase-like"/>
    <property type="match status" value="1"/>
</dbReference>
<dbReference type="HAMAP" id="MF_00082">
    <property type="entry name" value="ArgB"/>
    <property type="match status" value="1"/>
</dbReference>
<dbReference type="InterPro" id="IPR036393">
    <property type="entry name" value="AceGlu_kinase-like_sf"/>
</dbReference>
<dbReference type="InterPro" id="IPR004662">
    <property type="entry name" value="AcgluKinase_fam"/>
</dbReference>
<dbReference type="InterPro" id="IPR037528">
    <property type="entry name" value="ArgB"/>
</dbReference>
<dbReference type="InterPro" id="IPR001048">
    <property type="entry name" value="Asp/Glu/Uridylate_kinase"/>
</dbReference>
<dbReference type="InterPro" id="IPR001057">
    <property type="entry name" value="Glu/AcGlu_kinase"/>
</dbReference>
<dbReference type="InterPro" id="IPR041727">
    <property type="entry name" value="NAGK-C"/>
</dbReference>
<dbReference type="NCBIfam" id="TIGR00761">
    <property type="entry name" value="argB"/>
    <property type="match status" value="1"/>
</dbReference>
<dbReference type="PANTHER" id="PTHR23342">
    <property type="entry name" value="N-ACETYLGLUTAMATE SYNTHASE"/>
    <property type="match status" value="1"/>
</dbReference>
<dbReference type="PANTHER" id="PTHR23342:SF0">
    <property type="entry name" value="N-ACETYLGLUTAMATE SYNTHASE, MITOCHONDRIAL"/>
    <property type="match status" value="1"/>
</dbReference>
<dbReference type="Pfam" id="PF00696">
    <property type="entry name" value="AA_kinase"/>
    <property type="match status" value="1"/>
</dbReference>
<dbReference type="PIRSF" id="PIRSF000728">
    <property type="entry name" value="NAGK"/>
    <property type="match status" value="1"/>
</dbReference>
<dbReference type="PRINTS" id="PR00474">
    <property type="entry name" value="GLU5KINASE"/>
</dbReference>
<dbReference type="SUPFAM" id="SSF53633">
    <property type="entry name" value="Carbamate kinase-like"/>
    <property type="match status" value="1"/>
</dbReference>
<sequence>MPQLPAPTDVTPARKAEILAEALPYIKRFFDKTVVIKYGGNAMTDPHLKDCFARDVVLLKLVGLNPVVVHGGGPQIETLLARVGKKGEFIQGMRVTDAETMEVVEMVLGGQVNKEIVSLINQHGGKAVGLTGKDASFIRAKKLLMQKEDAAPGDVVDVGQVGEITKIDPSLIAFLDQGDFIPVIAPIGVGEAGETYNINADVVAGKLAEILKAEKLVLLTNTPGVLDKAGKLLTGLTPHQIDDLVADGTLSGGMLPKISSALDAARNGVKSVHIIDGRVEHCLLLEILTDHGVGTMIKSK</sequence>
<name>ARGB_AROAE</name>
<feature type="chain" id="PRO_0000264681" description="Acetylglutamate kinase">
    <location>
        <begin position="1"/>
        <end position="300"/>
    </location>
</feature>
<feature type="binding site" evidence="1">
    <location>
        <begin position="72"/>
        <end position="73"/>
    </location>
    <ligand>
        <name>substrate</name>
    </ligand>
</feature>
<feature type="binding site" evidence="1">
    <location>
        <position position="94"/>
    </location>
    <ligand>
        <name>substrate</name>
    </ligand>
</feature>
<feature type="binding site" evidence="1">
    <location>
        <position position="197"/>
    </location>
    <ligand>
        <name>substrate</name>
    </ligand>
</feature>
<feature type="site" description="Transition state stabilizer" evidence="1">
    <location>
        <position position="37"/>
    </location>
</feature>
<feature type="site" description="Transition state stabilizer" evidence="1">
    <location>
        <position position="257"/>
    </location>
</feature>
<reference key="1">
    <citation type="journal article" date="2005" name="Arch. Microbiol.">
        <title>The genome sequence of an anaerobic aromatic-degrading denitrifying bacterium, strain EbN1.</title>
        <authorList>
            <person name="Rabus R."/>
            <person name="Kube M."/>
            <person name="Heider J."/>
            <person name="Beck A."/>
            <person name="Heitmann K."/>
            <person name="Widdel F."/>
            <person name="Reinhardt R."/>
        </authorList>
    </citation>
    <scope>NUCLEOTIDE SEQUENCE [LARGE SCALE GENOMIC DNA]</scope>
    <source>
        <strain>DSM 19018 / LMG 30748 / EbN1</strain>
    </source>
</reference>
<accession>Q5P286</accession>
<keyword id="KW-0028">Amino-acid biosynthesis</keyword>
<keyword id="KW-0055">Arginine biosynthesis</keyword>
<keyword id="KW-0067">ATP-binding</keyword>
<keyword id="KW-0963">Cytoplasm</keyword>
<keyword id="KW-0418">Kinase</keyword>
<keyword id="KW-0547">Nucleotide-binding</keyword>
<keyword id="KW-1185">Reference proteome</keyword>
<keyword id="KW-0808">Transferase</keyword>
<comment type="function">
    <text evidence="1">Catalyzes the ATP-dependent phosphorylation of N-acetyl-L-glutamate.</text>
</comment>
<comment type="catalytic activity">
    <reaction evidence="1">
        <text>N-acetyl-L-glutamate + ATP = N-acetyl-L-glutamyl 5-phosphate + ADP</text>
        <dbReference type="Rhea" id="RHEA:14629"/>
        <dbReference type="ChEBI" id="CHEBI:30616"/>
        <dbReference type="ChEBI" id="CHEBI:44337"/>
        <dbReference type="ChEBI" id="CHEBI:57936"/>
        <dbReference type="ChEBI" id="CHEBI:456216"/>
        <dbReference type="EC" id="2.7.2.8"/>
    </reaction>
</comment>
<comment type="pathway">
    <text evidence="1">Amino-acid biosynthesis; L-arginine biosynthesis; N(2)-acetyl-L-ornithine from L-glutamate: step 2/4.</text>
</comment>
<comment type="subcellular location">
    <subcellularLocation>
        <location evidence="1">Cytoplasm</location>
    </subcellularLocation>
</comment>
<comment type="similarity">
    <text evidence="1">Belongs to the acetylglutamate kinase family. ArgB subfamily.</text>
</comment>
<gene>
    <name evidence="1" type="primary">argB</name>
    <name type="ordered locus">AZOSEA24530</name>
    <name type="ORF">ebA4330</name>
</gene>
<organism>
    <name type="scientific">Aromatoleum aromaticum (strain DSM 19018 / LMG 30748 / EbN1)</name>
    <name type="common">Azoarcus sp. (strain EbN1)</name>
    <dbReference type="NCBI Taxonomy" id="76114"/>
    <lineage>
        <taxon>Bacteria</taxon>
        <taxon>Pseudomonadati</taxon>
        <taxon>Pseudomonadota</taxon>
        <taxon>Betaproteobacteria</taxon>
        <taxon>Rhodocyclales</taxon>
        <taxon>Rhodocyclaceae</taxon>
        <taxon>Aromatoleum</taxon>
    </lineage>
</organism>
<evidence type="ECO:0000255" key="1">
    <source>
        <dbReference type="HAMAP-Rule" id="MF_00082"/>
    </source>
</evidence>
<proteinExistence type="inferred from homology"/>